<organismHost>
    <name type="scientific">Ornithodoros</name>
    <name type="common">relapsing fever ticks</name>
    <dbReference type="NCBI Taxonomy" id="6937"/>
</organismHost>
<organismHost>
    <name type="scientific">Phacochoerus aethiopicus</name>
    <name type="common">Warthog</name>
    <dbReference type="NCBI Taxonomy" id="85517"/>
</organismHost>
<organismHost>
    <name type="scientific">Phacochoerus africanus</name>
    <name type="common">Warthog</name>
    <dbReference type="NCBI Taxonomy" id="41426"/>
</organismHost>
<organismHost>
    <name type="scientific">Potamochoerus larvatus</name>
    <name type="common">Bushpig</name>
    <dbReference type="NCBI Taxonomy" id="273792"/>
</organismHost>
<organismHost>
    <name type="scientific">Sus scrofa</name>
    <name type="common">Pig</name>
    <dbReference type="NCBI Taxonomy" id="9823"/>
</organismHost>
<gene>
    <name type="ordered locus">War-024</name>
</gene>
<accession>P0CAJ4</accession>
<feature type="chain" id="PRO_0000373719" description="Uncharacterized membrane protein X69R">
    <location>
        <begin position="1"/>
        <end position="69"/>
    </location>
</feature>
<feature type="topological domain" description="Cytoplasmic" evidence="1">
    <location>
        <begin position="1"/>
        <end position="15"/>
    </location>
</feature>
<feature type="transmembrane region" description="Helical" evidence="1">
    <location>
        <begin position="16"/>
        <end position="36"/>
    </location>
</feature>
<feature type="topological domain" description="Extracellular" evidence="1">
    <location>
        <begin position="37"/>
        <end position="69"/>
    </location>
</feature>
<feature type="glycosylation site" description="N-linked (GlcNAc...) asparagine; by host" evidence="1">
    <location>
        <position position="51"/>
    </location>
</feature>
<keyword id="KW-0325">Glycoprotein</keyword>
<keyword id="KW-1043">Host membrane</keyword>
<keyword id="KW-0472">Membrane</keyword>
<keyword id="KW-0812">Transmembrane</keyword>
<keyword id="KW-1133">Transmembrane helix</keyword>
<protein>
    <recommendedName>
        <fullName>Uncharacterized membrane protein X69R</fullName>
    </recommendedName>
</protein>
<comment type="subcellular location">
    <subcellularLocation>
        <location evidence="2">Host membrane</location>
        <topology evidence="2">Single-pass membrane protein</topology>
    </subcellularLocation>
</comment>
<comment type="similarity">
    <text evidence="2">Belongs to the asfivirus X69R family.</text>
</comment>
<dbReference type="EMBL" id="AY261366">
    <property type="status" value="NOT_ANNOTATED_CDS"/>
    <property type="molecule type" value="Genomic_DNA"/>
</dbReference>
<dbReference type="SMR" id="P0CAJ4"/>
<dbReference type="Proteomes" id="UP000000858">
    <property type="component" value="Segment"/>
</dbReference>
<dbReference type="GO" id="GO:0033644">
    <property type="term" value="C:host cell membrane"/>
    <property type="evidence" value="ECO:0007669"/>
    <property type="project" value="UniProtKB-SubCell"/>
</dbReference>
<dbReference type="GO" id="GO:0016020">
    <property type="term" value="C:membrane"/>
    <property type="evidence" value="ECO:0007669"/>
    <property type="project" value="UniProtKB-KW"/>
</dbReference>
<evidence type="ECO:0000255" key="1"/>
<evidence type="ECO:0000305" key="2"/>
<sequence>MLLYIVIIVACIISKLVPNEYWAIHLFFIIMIFMVYMYEKLDIHQKYQFWNYTMSGLSGHNVQITCKCY</sequence>
<proteinExistence type="inferred from homology"/>
<name>VF69R_ASFWA</name>
<reference key="1">
    <citation type="submission" date="2003-03" db="EMBL/GenBank/DDBJ databases">
        <title>African swine fever virus genomes.</title>
        <authorList>
            <person name="Kutish G.F."/>
            <person name="Rock D.L."/>
        </authorList>
    </citation>
    <scope>NUCLEOTIDE SEQUENCE [LARGE SCALE GENOMIC DNA]</scope>
</reference>
<organism>
    <name type="scientific">African swine fever virus (isolate Warthog/Namibia/Wart80/1980)</name>
    <name type="common">ASFV</name>
    <dbReference type="NCBI Taxonomy" id="561444"/>
    <lineage>
        <taxon>Viruses</taxon>
        <taxon>Varidnaviria</taxon>
        <taxon>Bamfordvirae</taxon>
        <taxon>Nucleocytoviricota</taxon>
        <taxon>Pokkesviricetes</taxon>
        <taxon>Asfuvirales</taxon>
        <taxon>Asfarviridae</taxon>
        <taxon>Asfivirus</taxon>
        <taxon>African swine fever virus</taxon>
    </lineage>
</organism>